<gene>
    <name evidence="1" type="primary">rpsT</name>
    <name type="ordered locus">Xaut_1690</name>
</gene>
<feature type="chain" id="PRO_1000126536" description="Small ribosomal subunit protein bS20">
    <location>
        <begin position="1"/>
        <end position="89"/>
    </location>
</feature>
<organism>
    <name type="scientific">Xanthobacter autotrophicus (strain ATCC BAA-1158 / Py2)</name>
    <dbReference type="NCBI Taxonomy" id="78245"/>
    <lineage>
        <taxon>Bacteria</taxon>
        <taxon>Pseudomonadati</taxon>
        <taxon>Pseudomonadota</taxon>
        <taxon>Alphaproteobacteria</taxon>
        <taxon>Hyphomicrobiales</taxon>
        <taxon>Xanthobacteraceae</taxon>
        <taxon>Xanthobacter</taxon>
    </lineage>
</organism>
<name>RS20_XANP2</name>
<comment type="function">
    <text evidence="1">Binds directly to 16S ribosomal RNA.</text>
</comment>
<comment type="similarity">
    <text evidence="1">Belongs to the bacterial ribosomal protein bS20 family.</text>
</comment>
<accession>A7IFZ2</accession>
<proteinExistence type="inferred from homology"/>
<reference key="1">
    <citation type="submission" date="2007-07" db="EMBL/GenBank/DDBJ databases">
        <title>Complete sequence of chromosome of Xanthobacter autotrophicus Py2.</title>
        <authorList>
            <consortium name="US DOE Joint Genome Institute"/>
            <person name="Copeland A."/>
            <person name="Lucas S."/>
            <person name="Lapidus A."/>
            <person name="Barry K."/>
            <person name="Glavina del Rio T."/>
            <person name="Hammon N."/>
            <person name="Israni S."/>
            <person name="Dalin E."/>
            <person name="Tice H."/>
            <person name="Pitluck S."/>
            <person name="Sims D."/>
            <person name="Brettin T."/>
            <person name="Bruce D."/>
            <person name="Detter J.C."/>
            <person name="Han C."/>
            <person name="Tapia R."/>
            <person name="Brainard J."/>
            <person name="Schmutz J."/>
            <person name="Larimer F."/>
            <person name="Land M."/>
            <person name="Hauser L."/>
            <person name="Kyrpides N."/>
            <person name="Kim E."/>
            <person name="Ensigns S.A."/>
            <person name="Richardson P."/>
        </authorList>
    </citation>
    <scope>NUCLEOTIDE SEQUENCE [LARGE SCALE GENOMIC DNA]</scope>
    <source>
        <strain>ATCC BAA-1158 / Py2</strain>
    </source>
</reference>
<sequence length="89" mass="9776">MANTPSAKKAVRKIERRTEVNRSRRSRVRTYLRKLEDALTAGDATAATAAFQAAEPEIMRAVTKGVLHKNTASRKVSRLAARVKKLSAA</sequence>
<protein>
    <recommendedName>
        <fullName evidence="1">Small ribosomal subunit protein bS20</fullName>
    </recommendedName>
    <alternativeName>
        <fullName evidence="2">30S ribosomal protein S20</fullName>
    </alternativeName>
</protein>
<dbReference type="EMBL" id="CP000781">
    <property type="protein sequence ID" value="ABS66935.1"/>
    <property type="molecule type" value="Genomic_DNA"/>
</dbReference>
<dbReference type="SMR" id="A7IFZ2"/>
<dbReference type="STRING" id="78245.Xaut_1690"/>
<dbReference type="KEGG" id="xau:Xaut_1690"/>
<dbReference type="eggNOG" id="COG0268">
    <property type="taxonomic scope" value="Bacteria"/>
</dbReference>
<dbReference type="HOGENOM" id="CLU_160655_3_0_5"/>
<dbReference type="OrthoDB" id="9807974at2"/>
<dbReference type="PhylomeDB" id="A7IFZ2"/>
<dbReference type="Proteomes" id="UP000002417">
    <property type="component" value="Chromosome"/>
</dbReference>
<dbReference type="GO" id="GO:0005829">
    <property type="term" value="C:cytosol"/>
    <property type="evidence" value="ECO:0007669"/>
    <property type="project" value="TreeGrafter"/>
</dbReference>
<dbReference type="GO" id="GO:0015935">
    <property type="term" value="C:small ribosomal subunit"/>
    <property type="evidence" value="ECO:0007669"/>
    <property type="project" value="TreeGrafter"/>
</dbReference>
<dbReference type="GO" id="GO:0070181">
    <property type="term" value="F:small ribosomal subunit rRNA binding"/>
    <property type="evidence" value="ECO:0007669"/>
    <property type="project" value="TreeGrafter"/>
</dbReference>
<dbReference type="GO" id="GO:0003735">
    <property type="term" value="F:structural constituent of ribosome"/>
    <property type="evidence" value="ECO:0007669"/>
    <property type="project" value="InterPro"/>
</dbReference>
<dbReference type="GO" id="GO:0006412">
    <property type="term" value="P:translation"/>
    <property type="evidence" value="ECO:0007669"/>
    <property type="project" value="UniProtKB-UniRule"/>
</dbReference>
<dbReference type="FunFam" id="1.20.58.110:FF:000001">
    <property type="entry name" value="30S ribosomal protein S20"/>
    <property type="match status" value="1"/>
</dbReference>
<dbReference type="Gene3D" id="1.20.58.110">
    <property type="entry name" value="Ribosomal protein S20"/>
    <property type="match status" value="1"/>
</dbReference>
<dbReference type="HAMAP" id="MF_00500">
    <property type="entry name" value="Ribosomal_bS20"/>
    <property type="match status" value="1"/>
</dbReference>
<dbReference type="InterPro" id="IPR002583">
    <property type="entry name" value="Ribosomal_bS20"/>
</dbReference>
<dbReference type="InterPro" id="IPR036510">
    <property type="entry name" value="Ribosomal_bS20_sf"/>
</dbReference>
<dbReference type="NCBIfam" id="TIGR00029">
    <property type="entry name" value="S20"/>
    <property type="match status" value="1"/>
</dbReference>
<dbReference type="PANTHER" id="PTHR33398">
    <property type="entry name" value="30S RIBOSOMAL PROTEIN S20"/>
    <property type="match status" value="1"/>
</dbReference>
<dbReference type="PANTHER" id="PTHR33398:SF1">
    <property type="entry name" value="SMALL RIBOSOMAL SUBUNIT PROTEIN BS20C"/>
    <property type="match status" value="1"/>
</dbReference>
<dbReference type="Pfam" id="PF01649">
    <property type="entry name" value="Ribosomal_S20p"/>
    <property type="match status" value="1"/>
</dbReference>
<dbReference type="SUPFAM" id="SSF46992">
    <property type="entry name" value="Ribosomal protein S20"/>
    <property type="match status" value="1"/>
</dbReference>
<evidence type="ECO:0000255" key="1">
    <source>
        <dbReference type="HAMAP-Rule" id="MF_00500"/>
    </source>
</evidence>
<evidence type="ECO:0000305" key="2"/>
<keyword id="KW-1185">Reference proteome</keyword>
<keyword id="KW-0687">Ribonucleoprotein</keyword>
<keyword id="KW-0689">Ribosomal protein</keyword>
<keyword id="KW-0694">RNA-binding</keyword>
<keyword id="KW-0699">rRNA-binding</keyword>